<keyword id="KW-0141">cGMP biosynthesis</keyword>
<keyword id="KW-0963">Cytoplasm</keyword>
<keyword id="KW-0342">GTP-binding</keyword>
<keyword id="KW-0456">Lyase</keyword>
<keyword id="KW-0547">Nucleotide-binding</keyword>
<keyword id="KW-0597">Phosphoprotein</keyword>
<keyword id="KW-1185">Reference proteome</keyword>
<dbReference type="EC" id="4.6.1.2" evidence="1"/>
<dbReference type="EMBL" id="DQ008575">
    <property type="protein sequence ID" value="AAY26556.1"/>
    <property type="molecule type" value="mRNA"/>
</dbReference>
<dbReference type="RefSeq" id="NP_001018045.1">
    <property type="nucleotide sequence ID" value="NM_001018035.1"/>
</dbReference>
<dbReference type="SMR" id="Q4ZHS0"/>
<dbReference type="FunCoup" id="Q4ZHS0">
    <property type="interactions" value="308"/>
</dbReference>
<dbReference type="STRING" id="9615.ENSCAFP00000012533"/>
<dbReference type="PaxDb" id="9612-ENSCAFP00000012533"/>
<dbReference type="GeneID" id="482663"/>
<dbReference type="KEGG" id="cfa:482663"/>
<dbReference type="CTD" id="2982"/>
<dbReference type="eggNOG" id="KOG4171">
    <property type="taxonomic scope" value="Eukaryota"/>
</dbReference>
<dbReference type="InParanoid" id="Q4ZHS0"/>
<dbReference type="OrthoDB" id="6127067at2759"/>
<dbReference type="Proteomes" id="UP000002254">
    <property type="component" value="Unplaced"/>
</dbReference>
<dbReference type="Proteomes" id="UP000694429">
    <property type="component" value="Unplaced"/>
</dbReference>
<dbReference type="Proteomes" id="UP000694542">
    <property type="component" value="Unplaced"/>
</dbReference>
<dbReference type="Proteomes" id="UP000805418">
    <property type="component" value="Unplaced"/>
</dbReference>
<dbReference type="GO" id="GO:0008074">
    <property type="term" value="C:guanylate cyclase complex, soluble"/>
    <property type="evidence" value="ECO:0000318"/>
    <property type="project" value="GO_Central"/>
</dbReference>
<dbReference type="GO" id="GO:0005525">
    <property type="term" value="F:GTP binding"/>
    <property type="evidence" value="ECO:0007669"/>
    <property type="project" value="UniProtKB-KW"/>
</dbReference>
<dbReference type="GO" id="GO:0004383">
    <property type="term" value="F:guanylate cyclase activity"/>
    <property type="evidence" value="ECO:0000318"/>
    <property type="project" value="GO_Central"/>
</dbReference>
<dbReference type="GO" id="GO:0020037">
    <property type="term" value="F:heme binding"/>
    <property type="evidence" value="ECO:0007669"/>
    <property type="project" value="InterPro"/>
</dbReference>
<dbReference type="GO" id="GO:0006182">
    <property type="term" value="P:cGMP biosynthetic process"/>
    <property type="evidence" value="ECO:0000318"/>
    <property type="project" value="GO_Central"/>
</dbReference>
<dbReference type="GO" id="GO:0019934">
    <property type="term" value="P:cGMP-mediated signaling"/>
    <property type="evidence" value="ECO:0000318"/>
    <property type="project" value="GO_Central"/>
</dbReference>
<dbReference type="GO" id="GO:0070482">
    <property type="term" value="P:response to oxygen levels"/>
    <property type="evidence" value="ECO:0000318"/>
    <property type="project" value="GO_Central"/>
</dbReference>
<dbReference type="CDD" id="cd07302">
    <property type="entry name" value="CHD"/>
    <property type="match status" value="1"/>
</dbReference>
<dbReference type="FunFam" id="3.30.450.260:FF:000002">
    <property type="entry name" value="guanylate cyclase soluble subunit alpha-2"/>
    <property type="match status" value="1"/>
</dbReference>
<dbReference type="FunFam" id="3.30.70.1230:FF:000007">
    <property type="entry name" value="Guanylate cyclase soluble subunit alpha-3"/>
    <property type="match status" value="1"/>
</dbReference>
<dbReference type="FunFam" id="3.90.1520.10:FF:000002">
    <property type="entry name" value="Guanylate cyclase soluble subunit alpha-3 isoform A"/>
    <property type="match status" value="1"/>
</dbReference>
<dbReference type="Gene3D" id="6.10.250.780">
    <property type="match status" value="1"/>
</dbReference>
<dbReference type="Gene3D" id="3.90.1520.10">
    <property type="entry name" value="H-NOX domain"/>
    <property type="match status" value="1"/>
</dbReference>
<dbReference type="Gene3D" id="3.30.450.260">
    <property type="entry name" value="Haem NO binding associated domain"/>
    <property type="match status" value="1"/>
</dbReference>
<dbReference type="Gene3D" id="3.30.70.1230">
    <property type="entry name" value="Nucleotide cyclase"/>
    <property type="match status" value="1"/>
</dbReference>
<dbReference type="InterPro" id="IPR001054">
    <property type="entry name" value="A/G_cyclase"/>
</dbReference>
<dbReference type="InterPro" id="IPR018297">
    <property type="entry name" value="A/G_cyclase_CS"/>
</dbReference>
<dbReference type="InterPro" id="IPR038158">
    <property type="entry name" value="H-NOX_domain_sf"/>
</dbReference>
<dbReference type="InterPro" id="IPR011645">
    <property type="entry name" value="HNOB_dom_associated"/>
</dbReference>
<dbReference type="InterPro" id="IPR042463">
    <property type="entry name" value="HNOB_dom_associated_sf"/>
</dbReference>
<dbReference type="InterPro" id="IPR024096">
    <property type="entry name" value="NO_sig/Golgi_transp_ligand-bd"/>
</dbReference>
<dbReference type="InterPro" id="IPR029787">
    <property type="entry name" value="Nucleotide_cyclase"/>
</dbReference>
<dbReference type="PANTHER" id="PTHR45655:SF4">
    <property type="entry name" value="GUANYLATE CYCLASE SOLUBLE SUBUNIT ALPHA-1"/>
    <property type="match status" value="1"/>
</dbReference>
<dbReference type="PANTHER" id="PTHR45655">
    <property type="entry name" value="GUANYLATE CYCLASE SOLUBLE SUBUNIT BETA-2"/>
    <property type="match status" value="1"/>
</dbReference>
<dbReference type="Pfam" id="PF00211">
    <property type="entry name" value="Guanylate_cyc"/>
    <property type="match status" value="1"/>
</dbReference>
<dbReference type="Pfam" id="PF07701">
    <property type="entry name" value="HNOBA"/>
    <property type="match status" value="1"/>
</dbReference>
<dbReference type="SMART" id="SM00044">
    <property type="entry name" value="CYCc"/>
    <property type="match status" value="1"/>
</dbReference>
<dbReference type="SUPFAM" id="SSF111126">
    <property type="entry name" value="Ligand-binding domain in the NO signalling and Golgi transport"/>
    <property type="match status" value="1"/>
</dbReference>
<dbReference type="SUPFAM" id="SSF55073">
    <property type="entry name" value="Nucleotide cyclase"/>
    <property type="match status" value="1"/>
</dbReference>
<dbReference type="PROSITE" id="PS00452">
    <property type="entry name" value="GUANYLATE_CYCLASE_1"/>
    <property type="match status" value="1"/>
</dbReference>
<dbReference type="PROSITE" id="PS50125">
    <property type="entry name" value="GUANYLATE_CYCLASE_2"/>
    <property type="match status" value="1"/>
</dbReference>
<name>GCYA1_CANLF</name>
<feature type="chain" id="PRO_0000074109" description="Guanylate cyclase soluble subunit alpha-1">
    <location>
        <begin position="1"/>
        <end position="690"/>
    </location>
</feature>
<feature type="domain" description="Guanylate cyclase" evidence="3">
    <location>
        <begin position="481"/>
        <end position="608"/>
    </location>
</feature>
<feature type="modified residue" description="Phosphoserine" evidence="2">
    <location>
        <position position="267"/>
    </location>
</feature>
<accession>Q4ZHS0</accession>
<protein>
    <recommendedName>
        <fullName>Guanylate cyclase soluble subunit alpha-1</fullName>
        <shortName>GCS-alpha-1</shortName>
        <ecNumber evidence="1">4.6.1.2</ecNumber>
    </recommendedName>
    <alternativeName>
        <fullName>Guanylate cyclase soluble subunit alpha-3</fullName>
        <shortName>GCS-alpha-3</shortName>
    </alternativeName>
    <alternativeName>
        <fullName>Soluble guanylate cyclase large subunit</fullName>
    </alternativeName>
</protein>
<proteinExistence type="evidence at transcript level"/>
<gene>
    <name type="primary">GUCY1A1</name>
    <name type="synonym">GUCY1A3</name>
</gene>
<organism>
    <name type="scientific">Canis lupus familiaris</name>
    <name type="common">Dog</name>
    <name type="synonym">Canis familiaris</name>
    <dbReference type="NCBI Taxonomy" id="9615"/>
    <lineage>
        <taxon>Eukaryota</taxon>
        <taxon>Metazoa</taxon>
        <taxon>Chordata</taxon>
        <taxon>Craniata</taxon>
        <taxon>Vertebrata</taxon>
        <taxon>Euteleostomi</taxon>
        <taxon>Mammalia</taxon>
        <taxon>Eutheria</taxon>
        <taxon>Laurasiatheria</taxon>
        <taxon>Carnivora</taxon>
        <taxon>Caniformia</taxon>
        <taxon>Canidae</taxon>
        <taxon>Canis</taxon>
    </lineage>
</organism>
<comment type="catalytic activity">
    <reaction evidence="1">
        <text>GTP = 3',5'-cyclic GMP + diphosphate</text>
        <dbReference type="Rhea" id="RHEA:13665"/>
        <dbReference type="ChEBI" id="CHEBI:33019"/>
        <dbReference type="ChEBI" id="CHEBI:37565"/>
        <dbReference type="ChEBI" id="CHEBI:57746"/>
        <dbReference type="EC" id="4.6.1.2"/>
    </reaction>
</comment>
<comment type="cofactor">
    <cofactor evidence="1">
        <name>Mg(2+)</name>
        <dbReference type="ChEBI" id="CHEBI:18420"/>
    </cofactor>
    <cofactor evidence="1">
        <name>Mn(2+)</name>
        <dbReference type="ChEBI" id="CHEBI:29035"/>
    </cofactor>
    <text evidence="1">Also has activity with Mn(2+) (in vitro).</text>
</comment>
<comment type="activity regulation">
    <text evidence="1">Activated by nitric oxide in the presence of magnesium or manganese ions.</text>
</comment>
<comment type="subunit">
    <text evidence="1">The active enzyme is formed by a heterodimer of an alpha and a beta subunit. Heterodimer with GUCY1B1.</text>
</comment>
<comment type="subcellular location">
    <subcellularLocation>
        <location evidence="4">Cytoplasm</location>
    </subcellularLocation>
</comment>
<comment type="miscellaneous">
    <text>There are two types of guanylate cyclases: soluble forms and membrane-associated receptor forms.</text>
</comment>
<comment type="similarity">
    <text evidence="3">Belongs to the adenylyl cyclase class-4/guanylyl cyclase family.</text>
</comment>
<reference key="1">
    <citation type="journal article" date="2006" name="Am. J. Physiol.">
        <title>NO responsiveness in pulmonary artery and airway smooth muscle: the role of cGMP regulation.</title>
        <authorList>
            <person name="Kwak Y.L."/>
            <person name="Jones K.A."/>
            <person name="Warner D.O."/>
            <person name="Perkins W.J."/>
        </authorList>
    </citation>
    <scope>NUCLEOTIDE SEQUENCE [MRNA]</scope>
</reference>
<sequence>MFCTKLKDLKITGECPLSLLAPGQVPKEPGEEVAGTSESGKATLPICQDVPEKNVQRSLPQRKTSRSRVYLHTLAESICKLIFPELERLNLALQRTLAKHKIKESRKSLEREDLEKIITDQAIAAGVPVEIVKESLGEELFKICYEEDEHILGVVGGTLKDFLNSFSTLLKQSSHCQEAEKRGRFEDASILCLDKDHDFLNVYYFFPKRITSLILPGIIKAAAHILYETEVEVSLLPPCFRNDCSEFVNQPYLLYSLHVKSTKPSLSPGKPQSSLVIPASLFCKTFPFHFMFDKDMTILQFGNGIRRLMNRRDFQGKPHFEEYFEVLTPKINQTFSGIMTMLNMQFVVRVRRWDNSVKKSSRVMDLKGQMIYIVESSAILFLGSPCVDRLEDFTGRGLYLSDIPIHNALRDVVLIGEQARAQDGLKKRLGKLKATLEQAHQALEEEKKKTVDLLCSIFPSEVAQQLWQGQVVQAKKFSNVTMLFSDIVGFTAICSQCSPLQVITMLNALYTRFDQQCGELDVYKVETIGDAYCVAGGLHKESDTHAAQIALMALKMMELSDEVMSPHGEPIKMRIGLHSGSVFAGVVGVKMPRYCLFGNNVTLANKFESCSIPRKINVSPTTYRLLKDCPGFVFTPRSREELPPNFPSEIPGICHFLEAYEPATNSKPWFQKKDVEDGNANFLGKASGID</sequence>
<evidence type="ECO:0000250" key="1">
    <source>
        <dbReference type="UniProtKB" id="Q02108"/>
    </source>
</evidence>
<evidence type="ECO:0000250" key="2">
    <source>
        <dbReference type="UniProtKB" id="Q9ERL9"/>
    </source>
</evidence>
<evidence type="ECO:0000255" key="3">
    <source>
        <dbReference type="PROSITE-ProRule" id="PRU00099"/>
    </source>
</evidence>
<evidence type="ECO:0000305" key="4"/>